<organism>
    <name type="scientific">Burkholderia ambifaria (strain ATCC BAA-244 / DSM 16087 / CCUG 44356 / LMG 19182 / AMMD)</name>
    <name type="common">Burkholderia cepacia (strain AMMD)</name>
    <dbReference type="NCBI Taxonomy" id="339670"/>
    <lineage>
        <taxon>Bacteria</taxon>
        <taxon>Pseudomonadati</taxon>
        <taxon>Pseudomonadota</taxon>
        <taxon>Betaproteobacteria</taxon>
        <taxon>Burkholderiales</taxon>
        <taxon>Burkholderiaceae</taxon>
        <taxon>Burkholderia</taxon>
        <taxon>Burkholderia cepacia complex</taxon>
    </lineage>
</organism>
<name>CCA_BURCM</name>
<sequence length="413" mass="45516">MNIYAVGGAIRDDLLGVPVQDRDYVVVGATPEQMVAQGFRPVGKDFPVFLHPDTQEEYALARTERKTAAGYHGFQFYFAPDVTLDEDLARRDLTINAMAREVSPEGALVGPVIDPFDGQADLHARVFRHVGDAFVEDPVRILRIARFAARFADFTVADDTLALMRRMVDAGEADALVAERVWQEIARGLMEAKPSRMFAVLRECGALARVLPEVDALWGVPQRADYHPEVDTGVHVMMVVDYAAKQGYSLPVRFAALTHDLGKATTPADVLPRHVGHEGRSVELIKPLCERLRVPNECRDLALVVAREHGNLHRVMEMGAAALVRFFERSDALRKPARFAEMLQACESDARGRLGLDTQPYPQAERLRVALVAARSVDAGAIARGVGDDVMQIKDAVHRARVEAVKQALAIGE</sequence>
<feature type="chain" id="PRO_1000054252" description="Multifunctional CCA protein">
    <location>
        <begin position="1"/>
        <end position="413"/>
    </location>
</feature>
<feature type="domain" description="HD" evidence="1">
    <location>
        <begin position="232"/>
        <end position="333"/>
    </location>
</feature>
<feature type="binding site" evidence="1">
    <location>
        <position position="8"/>
    </location>
    <ligand>
        <name>ATP</name>
        <dbReference type="ChEBI" id="CHEBI:30616"/>
    </ligand>
</feature>
<feature type="binding site" evidence="1">
    <location>
        <position position="8"/>
    </location>
    <ligand>
        <name>CTP</name>
        <dbReference type="ChEBI" id="CHEBI:37563"/>
    </ligand>
</feature>
<feature type="binding site" evidence="1">
    <location>
        <position position="11"/>
    </location>
    <ligand>
        <name>ATP</name>
        <dbReference type="ChEBI" id="CHEBI:30616"/>
    </ligand>
</feature>
<feature type="binding site" evidence="1">
    <location>
        <position position="11"/>
    </location>
    <ligand>
        <name>CTP</name>
        <dbReference type="ChEBI" id="CHEBI:37563"/>
    </ligand>
</feature>
<feature type="binding site" evidence="1">
    <location>
        <position position="21"/>
    </location>
    <ligand>
        <name>Mg(2+)</name>
        <dbReference type="ChEBI" id="CHEBI:18420"/>
    </ligand>
</feature>
<feature type="binding site" evidence="1">
    <location>
        <position position="23"/>
    </location>
    <ligand>
        <name>Mg(2+)</name>
        <dbReference type="ChEBI" id="CHEBI:18420"/>
    </ligand>
</feature>
<feature type="binding site" evidence="1">
    <location>
        <position position="91"/>
    </location>
    <ligand>
        <name>ATP</name>
        <dbReference type="ChEBI" id="CHEBI:30616"/>
    </ligand>
</feature>
<feature type="binding site" evidence="1">
    <location>
        <position position="91"/>
    </location>
    <ligand>
        <name>CTP</name>
        <dbReference type="ChEBI" id="CHEBI:37563"/>
    </ligand>
</feature>
<feature type="binding site" evidence="1">
    <location>
        <position position="143"/>
    </location>
    <ligand>
        <name>ATP</name>
        <dbReference type="ChEBI" id="CHEBI:30616"/>
    </ligand>
</feature>
<feature type="binding site" evidence="1">
    <location>
        <position position="143"/>
    </location>
    <ligand>
        <name>CTP</name>
        <dbReference type="ChEBI" id="CHEBI:37563"/>
    </ligand>
</feature>
<feature type="binding site" evidence="1">
    <location>
        <position position="146"/>
    </location>
    <ligand>
        <name>ATP</name>
        <dbReference type="ChEBI" id="CHEBI:30616"/>
    </ligand>
</feature>
<feature type="binding site" evidence="1">
    <location>
        <position position="146"/>
    </location>
    <ligand>
        <name>CTP</name>
        <dbReference type="ChEBI" id="CHEBI:37563"/>
    </ligand>
</feature>
<protein>
    <recommendedName>
        <fullName evidence="1">Multifunctional CCA protein</fullName>
    </recommendedName>
    <domain>
        <recommendedName>
            <fullName evidence="1">CCA-adding enzyme</fullName>
            <ecNumber evidence="1">2.7.7.72</ecNumber>
        </recommendedName>
        <alternativeName>
            <fullName evidence="1">CCA tRNA nucleotidyltransferase</fullName>
        </alternativeName>
        <alternativeName>
            <fullName evidence="1">tRNA CCA-pyrophosphorylase</fullName>
        </alternativeName>
        <alternativeName>
            <fullName evidence="1">tRNA adenylyl-/cytidylyl-transferase</fullName>
        </alternativeName>
        <alternativeName>
            <fullName evidence="1">tRNA nucleotidyltransferase</fullName>
        </alternativeName>
        <alternativeName>
            <fullName evidence="1">tRNA-NT</fullName>
        </alternativeName>
    </domain>
    <domain>
        <recommendedName>
            <fullName evidence="1">2'-nucleotidase</fullName>
            <ecNumber evidence="1">3.1.3.-</ecNumber>
        </recommendedName>
    </domain>
    <domain>
        <recommendedName>
            <fullName evidence="1">2',3'-cyclic phosphodiesterase</fullName>
            <ecNumber evidence="1">3.1.4.-</ecNumber>
        </recommendedName>
    </domain>
    <domain>
        <recommendedName>
            <fullName evidence="1">Phosphatase</fullName>
            <ecNumber evidence="1">3.1.3.-</ecNumber>
        </recommendedName>
    </domain>
</protein>
<evidence type="ECO:0000255" key="1">
    <source>
        <dbReference type="HAMAP-Rule" id="MF_01261"/>
    </source>
</evidence>
<keyword id="KW-0067">ATP-binding</keyword>
<keyword id="KW-0378">Hydrolase</keyword>
<keyword id="KW-0460">Magnesium</keyword>
<keyword id="KW-0479">Metal-binding</keyword>
<keyword id="KW-0511">Multifunctional enzyme</keyword>
<keyword id="KW-0533">Nickel</keyword>
<keyword id="KW-0547">Nucleotide-binding</keyword>
<keyword id="KW-0548">Nucleotidyltransferase</keyword>
<keyword id="KW-0692">RNA repair</keyword>
<keyword id="KW-0694">RNA-binding</keyword>
<keyword id="KW-0808">Transferase</keyword>
<keyword id="KW-0819">tRNA processing</keyword>
<comment type="function">
    <text evidence="1">Catalyzes the addition and repair of the essential 3'-terminal CCA sequence in tRNAs without using a nucleic acid template. Adds these three nucleotides in the order of C, C, and A to the tRNA nucleotide-73, using CTP and ATP as substrates and producing inorganic pyrophosphate. tRNA 3'-terminal CCA addition is required both for tRNA processing and repair. Also involved in tRNA surveillance by mediating tandem CCA addition to generate a CCACCA at the 3' terminus of unstable tRNAs. While stable tRNAs receive only 3'-terminal CCA, unstable tRNAs are marked with CCACCA and rapidly degraded.</text>
</comment>
<comment type="catalytic activity">
    <reaction evidence="1">
        <text>a tRNA precursor + 2 CTP + ATP = a tRNA with a 3' CCA end + 3 diphosphate</text>
        <dbReference type="Rhea" id="RHEA:14433"/>
        <dbReference type="Rhea" id="RHEA-COMP:10465"/>
        <dbReference type="Rhea" id="RHEA-COMP:10468"/>
        <dbReference type="ChEBI" id="CHEBI:30616"/>
        <dbReference type="ChEBI" id="CHEBI:33019"/>
        <dbReference type="ChEBI" id="CHEBI:37563"/>
        <dbReference type="ChEBI" id="CHEBI:74896"/>
        <dbReference type="ChEBI" id="CHEBI:83071"/>
        <dbReference type="EC" id="2.7.7.72"/>
    </reaction>
</comment>
<comment type="catalytic activity">
    <reaction evidence="1">
        <text>a tRNA with a 3' CCA end + 2 CTP + ATP = a tRNA with a 3' CCACCA end + 3 diphosphate</text>
        <dbReference type="Rhea" id="RHEA:76235"/>
        <dbReference type="Rhea" id="RHEA-COMP:10468"/>
        <dbReference type="Rhea" id="RHEA-COMP:18655"/>
        <dbReference type="ChEBI" id="CHEBI:30616"/>
        <dbReference type="ChEBI" id="CHEBI:33019"/>
        <dbReference type="ChEBI" id="CHEBI:37563"/>
        <dbReference type="ChEBI" id="CHEBI:83071"/>
        <dbReference type="ChEBI" id="CHEBI:195187"/>
    </reaction>
    <physiologicalReaction direction="left-to-right" evidence="1">
        <dbReference type="Rhea" id="RHEA:76236"/>
    </physiologicalReaction>
</comment>
<comment type="cofactor">
    <cofactor evidence="1">
        <name>Mg(2+)</name>
        <dbReference type="ChEBI" id="CHEBI:18420"/>
    </cofactor>
    <text evidence="1">Magnesium is required for nucleotidyltransferase activity.</text>
</comment>
<comment type="cofactor">
    <cofactor evidence="1">
        <name>Ni(2+)</name>
        <dbReference type="ChEBI" id="CHEBI:49786"/>
    </cofactor>
    <text evidence="1">Nickel for phosphatase activity.</text>
</comment>
<comment type="subunit">
    <text evidence="1">Monomer. Can also form homodimers and oligomers.</text>
</comment>
<comment type="domain">
    <text evidence="1">Comprises two domains: an N-terminal domain containing the nucleotidyltransferase activity and a C-terminal HD domain associated with both phosphodiesterase and phosphatase activities.</text>
</comment>
<comment type="miscellaneous">
    <text evidence="1">A single active site specifically recognizes both ATP and CTP and is responsible for their addition.</text>
</comment>
<comment type="similarity">
    <text evidence="1">Belongs to the tRNA nucleotidyltransferase/poly(A) polymerase family. Bacterial CCA-adding enzyme type 1 subfamily.</text>
</comment>
<accession>Q0BB41</accession>
<proteinExistence type="inferred from homology"/>
<gene>
    <name evidence="1" type="primary">cca</name>
    <name type="ordered locus">Bamb_3076</name>
</gene>
<reference key="1">
    <citation type="submission" date="2006-08" db="EMBL/GenBank/DDBJ databases">
        <title>Complete sequence of chromosome 1 of Burkholderia cepacia AMMD.</title>
        <authorList>
            <person name="Copeland A."/>
            <person name="Lucas S."/>
            <person name="Lapidus A."/>
            <person name="Barry K."/>
            <person name="Detter J.C."/>
            <person name="Glavina del Rio T."/>
            <person name="Hammon N."/>
            <person name="Israni S."/>
            <person name="Pitluck S."/>
            <person name="Bruce D."/>
            <person name="Chain P."/>
            <person name="Malfatti S."/>
            <person name="Shin M."/>
            <person name="Vergez L."/>
            <person name="Schmutz J."/>
            <person name="Larimer F."/>
            <person name="Land M."/>
            <person name="Hauser L."/>
            <person name="Kyrpides N."/>
            <person name="Kim E."/>
            <person name="Parke J."/>
            <person name="Coenye T."/>
            <person name="Konstantinidis K."/>
            <person name="Ramette A."/>
            <person name="Tiedje J."/>
            <person name="Richardson P."/>
        </authorList>
    </citation>
    <scope>NUCLEOTIDE SEQUENCE [LARGE SCALE GENOMIC DNA]</scope>
    <source>
        <strain>ATCC BAA-244 / DSM 16087 / CCUG 44356 / LMG 19182 / AMMD</strain>
    </source>
</reference>
<dbReference type="EC" id="2.7.7.72" evidence="1"/>
<dbReference type="EC" id="3.1.3.-" evidence="1"/>
<dbReference type="EC" id="3.1.4.-" evidence="1"/>
<dbReference type="EMBL" id="CP000440">
    <property type="protein sequence ID" value="ABI88632.1"/>
    <property type="molecule type" value="Genomic_DNA"/>
</dbReference>
<dbReference type="RefSeq" id="WP_011658147.1">
    <property type="nucleotide sequence ID" value="NC_008390.1"/>
</dbReference>
<dbReference type="SMR" id="Q0BB41"/>
<dbReference type="GeneID" id="93084723"/>
<dbReference type="KEGG" id="bam:Bamb_3076"/>
<dbReference type="PATRIC" id="fig|339670.21.peg.1786"/>
<dbReference type="eggNOG" id="COG0617">
    <property type="taxonomic scope" value="Bacteria"/>
</dbReference>
<dbReference type="Proteomes" id="UP000000662">
    <property type="component" value="Chromosome 1"/>
</dbReference>
<dbReference type="GO" id="GO:0005524">
    <property type="term" value="F:ATP binding"/>
    <property type="evidence" value="ECO:0007669"/>
    <property type="project" value="UniProtKB-UniRule"/>
</dbReference>
<dbReference type="GO" id="GO:0004810">
    <property type="term" value="F:CCA tRNA nucleotidyltransferase activity"/>
    <property type="evidence" value="ECO:0007669"/>
    <property type="project" value="UniProtKB-UniRule"/>
</dbReference>
<dbReference type="GO" id="GO:0004112">
    <property type="term" value="F:cyclic-nucleotide phosphodiesterase activity"/>
    <property type="evidence" value="ECO:0007669"/>
    <property type="project" value="UniProtKB-UniRule"/>
</dbReference>
<dbReference type="GO" id="GO:0000287">
    <property type="term" value="F:magnesium ion binding"/>
    <property type="evidence" value="ECO:0007669"/>
    <property type="project" value="UniProtKB-UniRule"/>
</dbReference>
<dbReference type="GO" id="GO:0016791">
    <property type="term" value="F:phosphatase activity"/>
    <property type="evidence" value="ECO:0007669"/>
    <property type="project" value="UniProtKB-UniRule"/>
</dbReference>
<dbReference type="GO" id="GO:0000049">
    <property type="term" value="F:tRNA binding"/>
    <property type="evidence" value="ECO:0007669"/>
    <property type="project" value="UniProtKB-UniRule"/>
</dbReference>
<dbReference type="GO" id="GO:0042245">
    <property type="term" value="P:RNA repair"/>
    <property type="evidence" value="ECO:0007669"/>
    <property type="project" value="UniProtKB-KW"/>
</dbReference>
<dbReference type="GO" id="GO:0001680">
    <property type="term" value="P:tRNA 3'-terminal CCA addition"/>
    <property type="evidence" value="ECO:0007669"/>
    <property type="project" value="UniProtKB-UniRule"/>
</dbReference>
<dbReference type="CDD" id="cd05398">
    <property type="entry name" value="NT_ClassII-CCAase"/>
    <property type="match status" value="1"/>
</dbReference>
<dbReference type="Gene3D" id="3.30.460.10">
    <property type="entry name" value="Beta Polymerase, domain 2"/>
    <property type="match status" value="1"/>
</dbReference>
<dbReference type="Gene3D" id="1.10.3090.10">
    <property type="entry name" value="cca-adding enzyme, domain 2"/>
    <property type="match status" value="1"/>
</dbReference>
<dbReference type="HAMAP" id="MF_01261">
    <property type="entry name" value="CCA_bact_type1"/>
    <property type="match status" value="1"/>
</dbReference>
<dbReference type="InterPro" id="IPR012006">
    <property type="entry name" value="CCA_bact"/>
</dbReference>
<dbReference type="InterPro" id="IPR006674">
    <property type="entry name" value="HD_domain"/>
</dbReference>
<dbReference type="InterPro" id="IPR043519">
    <property type="entry name" value="NT_sf"/>
</dbReference>
<dbReference type="InterPro" id="IPR002646">
    <property type="entry name" value="PolA_pol_head_dom"/>
</dbReference>
<dbReference type="InterPro" id="IPR032828">
    <property type="entry name" value="PolyA_RNA-bd"/>
</dbReference>
<dbReference type="InterPro" id="IPR050124">
    <property type="entry name" value="tRNA_CCA-adding_enzyme"/>
</dbReference>
<dbReference type="NCBIfam" id="NF008137">
    <property type="entry name" value="PRK10885.1"/>
    <property type="match status" value="1"/>
</dbReference>
<dbReference type="PANTHER" id="PTHR47545">
    <property type="entry name" value="MULTIFUNCTIONAL CCA PROTEIN"/>
    <property type="match status" value="1"/>
</dbReference>
<dbReference type="PANTHER" id="PTHR47545:SF1">
    <property type="entry name" value="MULTIFUNCTIONAL CCA PROTEIN"/>
    <property type="match status" value="1"/>
</dbReference>
<dbReference type="Pfam" id="PF01966">
    <property type="entry name" value="HD"/>
    <property type="match status" value="1"/>
</dbReference>
<dbReference type="Pfam" id="PF01743">
    <property type="entry name" value="PolyA_pol"/>
    <property type="match status" value="1"/>
</dbReference>
<dbReference type="Pfam" id="PF12627">
    <property type="entry name" value="PolyA_pol_RNAbd"/>
    <property type="match status" value="1"/>
</dbReference>
<dbReference type="PIRSF" id="PIRSF000813">
    <property type="entry name" value="CCA_bact"/>
    <property type="match status" value="1"/>
</dbReference>
<dbReference type="SUPFAM" id="SSF81301">
    <property type="entry name" value="Nucleotidyltransferase"/>
    <property type="match status" value="1"/>
</dbReference>
<dbReference type="SUPFAM" id="SSF81891">
    <property type="entry name" value="Poly A polymerase C-terminal region-like"/>
    <property type="match status" value="1"/>
</dbReference>
<dbReference type="PROSITE" id="PS51831">
    <property type="entry name" value="HD"/>
    <property type="match status" value="1"/>
</dbReference>